<proteinExistence type="inferred from homology"/>
<gene>
    <name evidence="1" type="primary">proS</name>
    <name type="ordered locus">SE_0939</name>
</gene>
<evidence type="ECO:0000255" key="1">
    <source>
        <dbReference type="HAMAP-Rule" id="MF_01569"/>
    </source>
</evidence>
<feature type="chain" id="PRO_0000139344" description="Proline--tRNA ligase">
    <location>
        <begin position="1"/>
        <end position="567"/>
    </location>
</feature>
<keyword id="KW-0030">Aminoacyl-tRNA synthetase</keyword>
<keyword id="KW-0067">ATP-binding</keyword>
<keyword id="KW-0963">Cytoplasm</keyword>
<keyword id="KW-0436">Ligase</keyword>
<keyword id="KW-0547">Nucleotide-binding</keyword>
<keyword id="KW-0648">Protein biosynthesis</keyword>
<comment type="function">
    <text evidence="1">Catalyzes the attachment of proline to tRNA(Pro) in a two-step reaction: proline is first activated by ATP to form Pro-AMP and then transferred to the acceptor end of tRNA(Pro). As ProRS can inadvertently accommodate and process non-cognate amino acids such as alanine and cysteine, to avoid such errors it has two additional distinct editing activities against alanine. One activity is designated as 'pretransfer' editing and involves the tRNA(Pro)-independent hydrolysis of activated Ala-AMP. The other activity is designated 'posttransfer' editing and involves deacylation of mischarged Ala-tRNA(Pro). The misacylated Cys-tRNA(Pro) is not edited by ProRS.</text>
</comment>
<comment type="catalytic activity">
    <reaction evidence="1">
        <text>tRNA(Pro) + L-proline + ATP = L-prolyl-tRNA(Pro) + AMP + diphosphate</text>
        <dbReference type="Rhea" id="RHEA:14305"/>
        <dbReference type="Rhea" id="RHEA-COMP:9700"/>
        <dbReference type="Rhea" id="RHEA-COMP:9702"/>
        <dbReference type="ChEBI" id="CHEBI:30616"/>
        <dbReference type="ChEBI" id="CHEBI:33019"/>
        <dbReference type="ChEBI" id="CHEBI:60039"/>
        <dbReference type="ChEBI" id="CHEBI:78442"/>
        <dbReference type="ChEBI" id="CHEBI:78532"/>
        <dbReference type="ChEBI" id="CHEBI:456215"/>
        <dbReference type="EC" id="6.1.1.15"/>
    </reaction>
</comment>
<comment type="subunit">
    <text evidence="1">Homodimer.</text>
</comment>
<comment type="subcellular location">
    <subcellularLocation>
        <location evidence="1">Cytoplasm</location>
    </subcellularLocation>
</comment>
<comment type="domain">
    <text evidence="1">Consists of three domains: the N-terminal catalytic domain, the editing domain and the C-terminal anticodon-binding domain.</text>
</comment>
<comment type="similarity">
    <text evidence="1">Belongs to the class-II aminoacyl-tRNA synthetase family. ProS type 1 subfamily.</text>
</comment>
<dbReference type="EC" id="6.1.1.15" evidence="1"/>
<dbReference type="EMBL" id="AE015929">
    <property type="protein sequence ID" value="AAO04536.1"/>
    <property type="molecule type" value="Genomic_DNA"/>
</dbReference>
<dbReference type="RefSeq" id="NP_764494.1">
    <property type="nucleotide sequence ID" value="NC_004461.1"/>
</dbReference>
<dbReference type="RefSeq" id="WP_001829513.1">
    <property type="nucleotide sequence ID" value="NZ_WBME01000001.1"/>
</dbReference>
<dbReference type="SMR" id="Q8CST7"/>
<dbReference type="KEGG" id="sep:SE_0939"/>
<dbReference type="PATRIC" id="fig|176280.10.peg.914"/>
<dbReference type="eggNOG" id="COG0442">
    <property type="taxonomic scope" value="Bacteria"/>
</dbReference>
<dbReference type="HOGENOM" id="CLU_016739_0_0_9"/>
<dbReference type="OrthoDB" id="9809052at2"/>
<dbReference type="Proteomes" id="UP000001411">
    <property type="component" value="Chromosome"/>
</dbReference>
<dbReference type="GO" id="GO:0005829">
    <property type="term" value="C:cytosol"/>
    <property type="evidence" value="ECO:0007669"/>
    <property type="project" value="TreeGrafter"/>
</dbReference>
<dbReference type="GO" id="GO:0002161">
    <property type="term" value="F:aminoacyl-tRNA deacylase activity"/>
    <property type="evidence" value="ECO:0007669"/>
    <property type="project" value="InterPro"/>
</dbReference>
<dbReference type="GO" id="GO:0005524">
    <property type="term" value="F:ATP binding"/>
    <property type="evidence" value="ECO:0007669"/>
    <property type="project" value="UniProtKB-UniRule"/>
</dbReference>
<dbReference type="GO" id="GO:0140096">
    <property type="term" value="F:catalytic activity, acting on a protein"/>
    <property type="evidence" value="ECO:0007669"/>
    <property type="project" value="UniProtKB-ARBA"/>
</dbReference>
<dbReference type="GO" id="GO:0004827">
    <property type="term" value="F:proline-tRNA ligase activity"/>
    <property type="evidence" value="ECO:0007669"/>
    <property type="project" value="UniProtKB-UniRule"/>
</dbReference>
<dbReference type="GO" id="GO:0016740">
    <property type="term" value="F:transferase activity"/>
    <property type="evidence" value="ECO:0007669"/>
    <property type="project" value="UniProtKB-ARBA"/>
</dbReference>
<dbReference type="GO" id="GO:0006433">
    <property type="term" value="P:prolyl-tRNA aminoacylation"/>
    <property type="evidence" value="ECO:0007669"/>
    <property type="project" value="UniProtKB-UniRule"/>
</dbReference>
<dbReference type="CDD" id="cd04334">
    <property type="entry name" value="ProRS-INS"/>
    <property type="match status" value="1"/>
</dbReference>
<dbReference type="CDD" id="cd00861">
    <property type="entry name" value="ProRS_anticodon_short"/>
    <property type="match status" value="1"/>
</dbReference>
<dbReference type="CDD" id="cd00779">
    <property type="entry name" value="ProRS_core_prok"/>
    <property type="match status" value="1"/>
</dbReference>
<dbReference type="FunFam" id="3.30.930.10:FF:000043">
    <property type="entry name" value="Proline--tRNA ligase"/>
    <property type="match status" value="1"/>
</dbReference>
<dbReference type="FunFam" id="3.40.50.800:FF:000011">
    <property type="entry name" value="Proline--tRNA ligase"/>
    <property type="match status" value="1"/>
</dbReference>
<dbReference type="Gene3D" id="3.40.50.800">
    <property type="entry name" value="Anticodon-binding domain"/>
    <property type="match status" value="1"/>
</dbReference>
<dbReference type="Gene3D" id="3.30.930.10">
    <property type="entry name" value="Bira Bifunctional Protein, Domain 2"/>
    <property type="match status" value="2"/>
</dbReference>
<dbReference type="Gene3D" id="3.90.960.10">
    <property type="entry name" value="YbaK/aminoacyl-tRNA synthetase-associated domain"/>
    <property type="match status" value="1"/>
</dbReference>
<dbReference type="HAMAP" id="MF_01569">
    <property type="entry name" value="Pro_tRNA_synth_type1"/>
    <property type="match status" value="1"/>
</dbReference>
<dbReference type="InterPro" id="IPR002314">
    <property type="entry name" value="aa-tRNA-synt_IIb"/>
</dbReference>
<dbReference type="InterPro" id="IPR006195">
    <property type="entry name" value="aa-tRNA-synth_II"/>
</dbReference>
<dbReference type="InterPro" id="IPR045864">
    <property type="entry name" value="aa-tRNA-synth_II/BPL/LPL"/>
</dbReference>
<dbReference type="InterPro" id="IPR004154">
    <property type="entry name" value="Anticodon-bd"/>
</dbReference>
<dbReference type="InterPro" id="IPR036621">
    <property type="entry name" value="Anticodon-bd_dom_sf"/>
</dbReference>
<dbReference type="InterPro" id="IPR002316">
    <property type="entry name" value="Pro-tRNA-ligase_IIa"/>
</dbReference>
<dbReference type="InterPro" id="IPR004500">
    <property type="entry name" value="Pro-tRNA-synth_IIa_bac-type"/>
</dbReference>
<dbReference type="InterPro" id="IPR023717">
    <property type="entry name" value="Pro-tRNA-Synthase_IIa_type1"/>
</dbReference>
<dbReference type="InterPro" id="IPR050062">
    <property type="entry name" value="Pro-tRNA_synthetase"/>
</dbReference>
<dbReference type="InterPro" id="IPR044140">
    <property type="entry name" value="ProRS_anticodon_short"/>
</dbReference>
<dbReference type="InterPro" id="IPR033730">
    <property type="entry name" value="ProRS_core_prok"/>
</dbReference>
<dbReference type="InterPro" id="IPR036754">
    <property type="entry name" value="YbaK/aa-tRNA-synt-asso_dom_sf"/>
</dbReference>
<dbReference type="InterPro" id="IPR007214">
    <property type="entry name" value="YbaK/aa-tRNA-synth-assoc-dom"/>
</dbReference>
<dbReference type="NCBIfam" id="NF006625">
    <property type="entry name" value="PRK09194.1"/>
    <property type="match status" value="1"/>
</dbReference>
<dbReference type="NCBIfam" id="TIGR00409">
    <property type="entry name" value="proS_fam_II"/>
    <property type="match status" value="1"/>
</dbReference>
<dbReference type="PANTHER" id="PTHR42753">
    <property type="entry name" value="MITOCHONDRIAL RIBOSOME PROTEIN L39/PROLYL-TRNA LIGASE FAMILY MEMBER"/>
    <property type="match status" value="1"/>
</dbReference>
<dbReference type="PANTHER" id="PTHR42753:SF2">
    <property type="entry name" value="PROLINE--TRNA LIGASE"/>
    <property type="match status" value="1"/>
</dbReference>
<dbReference type="Pfam" id="PF03129">
    <property type="entry name" value="HGTP_anticodon"/>
    <property type="match status" value="1"/>
</dbReference>
<dbReference type="Pfam" id="PF00587">
    <property type="entry name" value="tRNA-synt_2b"/>
    <property type="match status" value="1"/>
</dbReference>
<dbReference type="Pfam" id="PF04073">
    <property type="entry name" value="tRNA_edit"/>
    <property type="match status" value="1"/>
</dbReference>
<dbReference type="PRINTS" id="PR01046">
    <property type="entry name" value="TRNASYNTHPRO"/>
</dbReference>
<dbReference type="SUPFAM" id="SSF52954">
    <property type="entry name" value="Class II aaRS ABD-related"/>
    <property type="match status" value="1"/>
</dbReference>
<dbReference type="SUPFAM" id="SSF55681">
    <property type="entry name" value="Class II aaRS and biotin synthetases"/>
    <property type="match status" value="1"/>
</dbReference>
<dbReference type="SUPFAM" id="SSF55826">
    <property type="entry name" value="YbaK/ProRS associated domain"/>
    <property type="match status" value="1"/>
</dbReference>
<dbReference type="PROSITE" id="PS50862">
    <property type="entry name" value="AA_TRNA_LIGASE_II"/>
    <property type="match status" value="1"/>
</dbReference>
<reference key="1">
    <citation type="journal article" date="2003" name="Mol. Microbiol.">
        <title>Genome-based analysis of virulence genes in a non-biofilm-forming Staphylococcus epidermidis strain (ATCC 12228).</title>
        <authorList>
            <person name="Zhang Y.-Q."/>
            <person name="Ren S.-X."/>
            <person name="Li H.-L."/>
            <person name="Wang Y.-X."/>
            <person name="Fu G."/>
            <person name="Yang J."/>
            <person name="Qin Z.-Q."/>
            <person name="Miao Y.-G."/>
            <person name="Wang W.-Y."/>
            <person name="Chen R.-S."/>
            <person name="Shen Y."/>
            <person name="Chen Z."/>
            <person name="Yuan Z.-H."/>
            <person name="Zhao G.-P."/>
            <person name="Qu D."/>
            <person name="Danchin A."/>
            <person name="Wen Y.-M."/>
        </authorList>
    </citation>
    <scope>NUCLEOTIDE SEQUENCE [LARGE SCALE GENOMIC DNA]</scope>
    <source>
        <strain>ATCC 12228 / FDA PCI 1200</strain>
    </source>
</reference>
<protein>
    <recommendedName>
        <fullName evidence="1">Proline--tRNA ligase</fullName>
        <ecNumber evidence="1">6.1.1.15</ecNumber>
    </recommendedName>
    <alternativeName>
        <fullName evidence="1">Prolyl-tRNA synthetase</fullName>
        <shortName evidence="1">ProRS</shortName>
    </alternativeName>
</protein>
<organism>
    <name type="scientific">Staphylococcus epidermidis (strain ATCC 12228 / FDA PCI 1200)</name>
    <dbReference type="NCBI Taxonomy" id="176280"/>
    <lineage>
        <taxon>Bacteria</taxon>
        <taxon>Bacillati</taxon>
        <taxon>Bacillota</taxon>
        <taxon>Bacilli</taxon>
        <taxon>Bacillales</taxon>
        <taxon>Staphylococcaceae</taxon>
        <taxon>Staphylococcus</taxon>
    </lineage>
</organism>
<sequence length="567" mass="64359">MKQSKVFIPTMREVPAEAEALSHRLLLKAGLIKQSTSGIYSYLPLATRVLNNISKIIREEMESIDAVEILMPALQQAELWEESGRWSAYGPELMRLKDRNGREFALGPTHEEVVTSLVRDELKSYKQLPLTLFQIQSKYRDEKRPRFGLLRGREFLMKDAYSFHSDEASLDATYQDMYQAYSRIFKRVGINARPVVADSGAIGGSHTHEFMALSEIGEDTIVYSNESDYAANIEKAEVVYHPSHKHSALAELTKVETPNVKTAQEVAEYLKRPLDEIVKTMIFKIDGEFIMFLVRGHHELNEVKLKSYFGTEHVEMATPDEIVNLVDANPGSLGPIFDKDIKIYADNYLQDLNNFVVGANEDHYHYINVNIGRDFDVTEYGDFRFITQGEMLSDGSGVAQFAEGIEVGQVFKLGTKYSESMNATFLDNQGKAQPLIMGCYGIGVSRTLSAIVEQNNDENGIIWPKSVTPFDIHLITINPKKDDQRTLGDQLYQKLMDSYDVLYDDRKERAGVKFNDSDLIGLPVRVVVGKRAEEGIVEVKQRINGLSEEVQIDELEYYLQELFKNIK</sequence>
<accession>Q8CST7</accession>
<name>SYP_STAES</name>